<gene>
    <name type="primary">selenok</name>
    <name type="synonym">selk</name>
    <name evidence="7" type="ORF">TGas073e13.1</name>
</gene>
<dbReference type="EMBL" id="CR942388">
    <property type="protein sequence ID" value="CAL50708.1"/>
    <property type="molecule type" value="mRNA"/>
</dbReference>
<dbReference type="RefSeq" id="NP_001072180.1">
    <property type="nucleotide sequence ID" value="NM_001078712.1"/>
</dbReference>
<dbReference type="FunCoup" id="Q01H83">
    <property type="interactions" value="843"/>
</dbReference>
<dbReference type="PaxDb" id="8364-ENSXETP00000054287"/>
<dbReference type="GeneID" id="779591"/>
<dbReference type="KEGG" id="xtr:779591"/>
<dbReference type="CTD" id="58515"/>
<dbReference type="Xenbase" id="XB-GENE-5939196">
    <property type="gene designation" value="selenok"/>
</dbReference>
<dbReference type="eggNOG" id="ENOG502S3PW">
    <property type="taxonomic scope" value="Eukaryota"/>
</dbReference>
<dbReference type="HOGENOM" id="CLU_182590_0_1_1"/>
<dbReference type="InParanoid" id="Q01H83"/>
<dbReference type="OMA" id="MAGGXGR"/>
<dbReference type="OrthoDB" id="167295at2759"/>
<dbReference type="Proteomes" id="UP000008143">
    <property type="component" value="Chromosome 4"/>
</dbReference>
<dbReference type="GO" id="GO:0005783">
    <property type="term" value="C:endoplasmic reticulum"/>
    <property type="evidence" value="ECO:0000250"/>
    <property type="project" value="UniProtKB"/>
</dbReference>
<dbReference type="GO" id="GO:0005789">
    <property type="term" value="C:endoplasmic reticulum membrane"/>
    <property type="evidence" value="ECO:0000250"/>
    <property type="project" value="UniProtKB"/>
</dbReference>
<dbReference type="GO" id="GO:0005886">
    <property type="term" value="C:plasma membrane"/>
    <property type="evidence" value="ECO:0007669"/>
    <property type="project" value="UniProtKB-SubCell"/>
</dbReference>
<dbReference type="GO" id="GO:0006816">
    <property type="term" value="P:calcium ion transport"/>
    <property type="evidence" value="ECO:0007669"/>
    <property type="project" value="UniProtKB-KW"/>
</dbReference>
<dbReference type="GO" id="GO:0018345">
    <property type="term" value="P:protein palmitoylation"/>
    <property type="evidence" value="ECO:0000250"/>
    <property type="project" value="UniProtKB"/>
</dbReference>
<dbReference type="InterPro" id="IPR024491">
    <property type="entry name" value="Se_SelK/SelG"/>
</dbReference>
<dbReference type="PANTHER" id="PTHR16875">
    <property type="entry name" value="SELENOPROTEIN K"/>
    <property type="match status" value="1"/>
</dbReference>
<dbReference type="PANTHER" id="PTHR16875:SF0">
    <property type="entry name" value="SELENOPROTEIN K"/>
    <property type="match status" value="1"/>
</dbReference>
<dbReference type="Pfam" id="PF10961">
    <property type="entry name" value="SelK_SelG"/>
    <property type="match status" value="1"/>
</dbReference>
<accession>Q01H83</accession>
<evidence type="ECO:0000250" key="1"/>
<evidence type="ECO:0000250" key="2">
    <source>
        <dbReference type="UniProtKB" id="Q9JLJ1"/>
    </source>
</evidence>
<evidence type="ECO:0000250" key="3">
    <source>
        <dbReference type="UniProtKB" id="Q9Y6D0"/>
    </source>
</evidence>
<evidence type="ECO:0000255" key="4"/>
<evidence type="ECO:0000256" key="5">
    <source>
        <dbReference type="SAM" id="MobiDB-lite"/>
    </source>
</evidence>
<evidence type="ECO:0000305" key="6"/>
<evidence type="ECO:0000312" key="7">
    <source>
        <dbReference type="EMBL" id="CAL50708.1"/>
    </source>
</evidence>
<proteinExistence type="inferred from homology"/>
<organism>
    <name type="scientific">Xenopus tropicalis</name>
    <name type="common">Western clawed frog</name>
    <name type="synonym">Silurana tropicalis</name>
    <dbReference type="NCBI Taxonomy" id="8364"/>
    <lineage>
        <taxon>Eukaryota</taxon>
        <taxon>Metazoa</taxon>
        <taxon>Chordata</taxon>
        <taxon>Craniata</taxon>
        <taxon>Vertebrata</taxon>
        <taxon>Euteleostomi</taxon>
        <taxon>Amphibia</taxon>
        <taxon>Batrachia</taxon>
        <taxon>Anura</taxon>
        <taxon>Pipoidea</taxon>
        <taxon>Pipidae</taxon>
        <taxon>Xenopodinae</taxon>
        <taxon>Xenopus</taxon>
        <taxon>Silurana</taxon>
    </lineage>
</organism>
<feature type="chain" id="PRO_0000290207" description="Selenoprotein K">
    <location>
        <begin position="1"/>
        <end position="95"/>
    </location>
</feature>
<feature type="transmembrane region" description="Helical" evidence="4">
    <location>
        <begin position="20"/>
        <end position="42"/>
    </location>
</feature>
<feature type="region of interest" description="Disordered" evidence="5">
    <location>
        <begin position="48"/>
        <end position="95"/>
    </location>
</feature>
<feature type="non-standard amino acid" description="Selenocysteine" evidence="1">
    <location>
        <position position="93"/>
    </location>
</feature>
<sequence length="95" mass="10646">MVYIANGQVLDGQSRSPWRLSFLTDMFWGITDFIVMFFQSIIHPNVTRRGCQNSSSRTRFDDGRGPPGNPRRRMGRIDHNSGPNAPPMSGGGUGR</sequence>
<keyword id="KW-0106">Calcium</keyword>
<keyword id="KW-0109">Calcium transport</keyword>
<keyword id="KW-1003">Cell membrane</keyword>
<keyword id="KW-0256">Endoplasmic reticulum</keyword>
<keyword id="KW-0406">Ion transport</keyword>
<keyword id="KW-0472">Membrane</keyword>
<keyword id="KW-1185">Reference proteome</keyword>
<keyword id="KW-0712">Selenocysteine</keyword>
<keyword id="KW-0812">Transmembrane</keyword>
<keyword id="KW-1133">Transmembrane helix</keyword>
<keyword id="KW-0813">Transport</keyword>
<protein>
    <recommendedName>
        <fullName evidence="3">Selenoprotein K</fullName>
        <shortName>SelK</shortName>
    </recommendedName>
</protein>
<name>SELK_XENTR</name>
<comment type="function">
    <text evidence="2 3">Required for Ca(2+) flux in immune cells and plays a role in T-cell proliferation and in T-cell and neutrophil migration (By similarity). Involved in endoplasmic reticulum-associated degradation (ERAD) of soluble glycosylated proteins (By similarity). Required for cell surface expression of CD36 and involved in macrophage uptake of low-density lipoprotein and in foam cell formation (By similarity). Required for palmitoylation (By similarity).</text>
</comment>
<comment type="subcellular location">
    <subcellularLocation>
        <location evidence="3">Endoplasmic reticulum membrane</location>
        <topology evidence="4">Single-pass membrane protein</topology>
    </subcellularLocation>
    <subcellularLocation>
        <location evidence="3">Cell membrane</location>
        <topology evidence="4">Single-pass membrane protein</topology>
    </subcellularLocation>
    <text evidence="3">Probably mainly localized in the ER.</text>
</comment>
<comment type="similarity">
    <text evidence="6">Belongs to the selenoprotein K family.</text>
</comment>
<reference key="1">
    <citation type="submission" date="2006-10" db="EMBL/GenBank/DDBJ databases">
        <authorList>
            <consortium name="Sanger Xenopus tropicalis EST/cDNA project"/>
        </authorList>
    </citation>
    <scope>NUCLEOTIDE SEQUENCE [LARGE SCALE MRNA]</scope>
    <source>
        <tissue>Gastrula</tissue>
    </source>
</reference>